<proteinExistence type="inferred from homology"/>
<keyword id="KW-0963">Cytoplasm</keyword>
<keyword id="KW-0694">RNA-binding</keyword>
<protein>
    <recommendedName>
        <fullName evidence="1">SsrA-binding protein</fullName>
    </recommendedName>
    <alternativeName>
        <fullName evidence="1">Small protein B</fullName>
    </alternativeName>
</protein>
<accession>C3K282</accession>
<sequence>MAKQKKHPTGTIAQNKKARHDYFIEHRFEAGLVLAGWEVKSLRASKLQLVDSYVLLKDGEAWLLGSHITPLTTASTHVIADPVRTRKLLLNARELEKLAAAVQQKGYACICLSWYWSKHLVKCEIALGKGKKEYDKRDTERERDSNRELHRAVRNKGKED</sequence>
<name>SSRP_PSEFS</name>
<reference key="1">
    <citation type="journal article" date="2009" name="Genome Biol.">
        <title>Genomic and genetic analyses of diversity and plant interactions of Pseudomonas fluorescens.</title>
        <authorList>
            <person name="Silby M.W."/>
            <person name="Cerdeno-Tarraga A.M."/>
            <person name="Vernikos G.S."/>
            <person name="Giddens S.R."/>
            <person name="Jackson R.W."/>
            <person name="Preston G.M."/>
            <person name="Zhang X.-X."/>
            <person name="Moon C.D."/>
            <person name="Gehrig S.M."/>
            <person name="Godfrey S.A.C."/>
            <person name="Knight C.G."/>
            <person name="Malone J.G."/>
            <person name="Robinson Z."/>
            <person name="Spiers A.J."/>
            <person name="Harris S."/>
            <person name="Challis G.L."/>
            <person name="Yaxley A.M."/>
            <person name="Harris D."/>
            <person name="Seeger K."/>
            <person name="Murphy L."/>
            <person name="Rutter S."/>
            <person name="Squares R."/>
            <person name="Quail M.A."/>
            <person name="Saunders E."/>
            <person name="Mavromatis K."/>
            <person name="Brettin T.S."/>
            <person name="Bentley S.D."/>
            <person name="Hothersall J."/>
            <person name="Stephens E."/>
            <person name="Thomas C.M."/>
            <person name="Parkhill J."/>
            <person name="Levy S.B."/>
            <person name="Rainey P.B."/>
            <person name="Thomson N.R."/>
        </authorList>
    </citation>
    <scope>NUCLEOTIDE SEQUENCE [LARGE SCALE GENOMIC DNA]</scope>
    <source>
        <strain>SBW25</strain>
    </source>
</reference>
<comment type="function">
    <text evidence="1">Required for rescue of stalled ribosomes mediated by trans-translation. Binds to transfer-messenger RNA (tmRNA), required for stable association of tmRNA with ribosomes. tmRNA and SmpB together mimic tRNA shape, replacing the anticodon stem-loop with SmpB. tmRNA is encoded by the ssrA gene; the 2 termini fold to resemble tRNA(Ala) and it encodes a 'tag peptide', a short internal open reading frame. During trans-translation Ala-aminoacylated tmRNA acts like a tRNA, entering the A-site of stalled ribosomes, displacing the stalled mRNA. The ribosome then switches to translate the ORF on the tmRNA; the nascent peptide is terminated with the 'tag peptide' encoded by the tmRNA and targeted for degradation. The ribosome is freed to recommence translation, which seems to be the essential function of trans-translation.</text>
</comment>
<comment type="subcellular location">
    <subcellularLocation>
        <location evidence="1">Cytoplasm</location>
    </subcellularLocation>
    <text evidence="1">The tmRNA-SmpB complex associates with stalled 70S ribosomes.</text>
</comment>
<comment type="similarity">
    <text evidence="1">Belongs to the SmpB family.</text>
</comment>
<organism>
    <name type="scientific">Pseudomonas fluorescens (strain SBW25)</name>
    <dbReference type="NCBI Taxonomy" id="216595"/>
    <lineage>
        <taxon>Bacteria</taxon>
        <taxon>Pseudomonadati</taxon>
        <taxon>Pseudomonadota</taxon>
        <taxon>Gammaproteobacteria</taxon>
        <taxon>Pseudomonadales</taxon>
        <taxon>Pseudomonadaceae</taxon>
        <taxon>Pseudomonas</taxon>
    </lineage>
</organism>
<dbReference type="EMBL" id="AM181176">
    <property type="protein sequence ID" value="CAY52382.1"/>
    <property type="molecule type" value="Genomic_DNA"/>
</dbReference>
<dbReference type="RefSeq" id="WP_003235073.1">
    <property type="nucleotide sequence ID" value="NC_012660.1"/>
</dbReference>
<dbReference type="SMR" id="C3K282"/>
<dbReference type="STRING" id="294.SRM1_00801"/>
<dbReference type="GeneID" id="93501990"/>
<dbReference type="eggNOG" id="COG0691">
    <property type="taxonomic scope" value="Bacteria"/>
</dbReference>
<dbReference type="HOGENOM" id="CLU_108953_3_0_6"/>
<dbReference type="OrthoDB" id="9805462at2"/>
<dbReference type="GO" id="GO:0005829">
    <property type="term" value="C:cytosol"/>
    <property type="evidence" value="ECO:0007669"/>
    <property type="project" value="TreeGrafter"/>
</dbReference>
<dbReference type="GO" id="GO:0003723">
    <property type="term" value="F:RNA binding"/>
    <property type="evidence" value="ECO:0007669"/>
    <property type="project" value="UniProtKB-UniRule"/>
</dbReference>
<dbReference type="GO" id="GO:0070929">
    <property type="term" value="P:trans-translation"/>
    <property type="evidence" value="ECO:0007669"/>
    <property type="project" value="UniProtKB-UniRule"/>
</dbReference>
<dbReference type="CDD" id="cd09294">
    <property type="entry name" value="SmpB"/>
    <property type="match status" value="1"/>
</dbReference>
<dbReference type="Gene3D" id="2.40.280.10">
    <property type="match status" value="1"/>
</dbReference>
<dbReference type="HAMAP" id="MF_00023">
    <property type="entry name" value="SmpB"/>
    <property type="match status" value="1"/>
</dbReference>
<dbReference type="InterPro" id="IPR023620">
    <property type="entry name" value="SmpB"/>
</dbReference>
<dbReference type="InterPro" id="IPR000037">
    <property type="entry name" value="SsrA-bd_prot"/>
</dbReference>
<dbReference type="InterPro" id="IPR020081">
    <property type="entry name" value="SsrA-bd_prot_CS"/>
</dbReference>
<dbReference type="NCBIfam" id="NF003843">
    <property type="entry name" value="PRK05422.1"/>
    <property type="match status" value="1"/>
</dbReference>
<dbReference type="NCBIfam" id="TIGR00086">
    <property type="entry name" value="smpB"/>
    <property type="match status" value="1"/>
</dbReference>
<dbReference type="PANTHER" id="PTHR30308:SF2">
    <property type="entry name" value="SSRA-BINDING PROTEIN"/>
    <property type="match status" value="1"/>
</dbReference>
<dbReference type="PANTHER" id="PTHR30308">
    <property type="entry name" value="TMRNA-BINDING COMPONENT OF TRANS-TRANSLATION TAGGING COMPLEX"/>
    <property type="match status" value="1"/>
</dbReference>
<dbReference type="Pfam" id="PF01668">
    <property type="entry name" value="SmpB"/>
    <property type="match status" value="1"/>
</dbReference>
<dbReference type="SUPFAM" id="SSF74982">
    <property type="entry name" value="Small protein B (SmpB)"/>
    <property type="match status" value="1"/>
</dbReference>
<dbReference type="PROSITE" id="PS01317">
    <property type="entry name" value="SSRP"/>
    <property type="match status" value="1"/>
</dbReference>
<evidence type="ECO:0000255" key="1">
    <source>
        <dbReference type="HAMAP-Rule" id="MF_00023"/>
    </source>
</evidence>
<evidence type="ECO:0000256" key="2">
    <source>
        <dbReference type="SAM" id="MobiDB-lite"/>
    </source>
</evidence>
<gene>
    <name evidence="1" type="primary">smpB</name>
    <name type="ordered locus">PFLU_5276</name>
</gene>
<feature type="chain" id="PRO_1000201939" description="SsrA-binding protein">
    <location>
        <begin position="1"/>
        <end position="160"/>
    </location>
</feature>
<feature type="region of interest" description="Disordered" evidence="2">
    <location>
        <begin position="134"/>
        <end position="160"/>
    </location>
</feature>